<proteinExistence type="inferred from homology"/>
<evidence type="ECO:0000255" key="1">
    <source>
        <dbReference type="HAMAP-Rule" id="MF_01849"/>
    </source>
</evidence>
<evidence type="ECO:0000255" key="2">
    <source>
        <dbReference type="PROSITE-ProRule" id="PRU01266"/>
    </source>
</evidence>
<accession>A0LY94</accession>
<protein>
    <recommendedName>
        <fullName evidence="1">Probable dual-specificity RNA methyltransferase RlmN</fullName>
        <ecNumber evidence="1">2.1.1.192</ecNumber>
    </recommendedName>
    <alternativeName>
        <fullName evidence="1">23S rRNA (adenine(2503)-C(2))-methyltransferase</fullName>
    </alternativeName>
    <alternativeName>
        <fullName evidence="1">23S rRNA m2A2503 methyltransferase</fullName>
    </alternativeName>
    <alternativeName>
        <fullName evidence="1">Ribosomal RNA large subunit methyltransferase N</fullName>
    </alternativeName>
    <alternativeName>
        <fullName evidence="1">tRNA (adenine(37)-C(2))-methyltransferase</fullName>
    </alternativeName>
    <alternativeName>
        <fullName evidence="1">tRNA m2A37 methyltransferase</fullName>
    </alternativeName>
</protein>
<feature type="chain" id="PRO_0000350199" description="Probable dual-specificity RNA methyltransferase RlmN">
    <location>
        <begin position="1"/>
        <end position="352"/>
    </location>
</feature>
<feature type="domain" description="Radical SAM core" evidence="2">
    <location>
        <begin position="105"/>
        <end position="339"/>
    </location>
</feature>
<feature type="active site" description="Proton acceptor" evidence="1">
    <location>
        <position position="99"/>
    </location>
</feature>
<feature type="active site" description="S-methylcysteine intermediate" evidence="1">
    <location>
        <position position="344"/>
    </location>
</feature>
<feature type="binding site" evidence="1">
    <location>
        <position position="119"/>
    </location>
    <ligand>
        <name>[4Fe-4S] cluster</name>
        <dbReference type="ChEBI" id="CHEBI:49883"/>
        <note>4Fe-4S-S-AdoMet</note>
    </ligand>
</feature>
<feature type="binding site" evidence="1">
    <location>
        <position position="123"/>
    </location>
    <ligand>
        <name>[4Fe-4S] cluster</name>
        <dbReference type="ChEBI" id="CHEBI:49883"/>
        <note>4Fe-4S-S-AdoMet</note>
    </ligand>
</feature>
<feature type="binding site" evidence="1">
    <location>
        <position position="126"/>
    </location>
    <ligand>
        <name>[4Fe-4S] cluster</name>
        <dbReference type="ChEBI" id="CHEBI:49883"/>
        <note>4Fe-4S-S-AdoMet</note>
    </ligand>
</feature>
<feature type="binding site" evidence="1">
    <location>
        <begin position="170"/>
        <end position="171"/>
    </location>
    <ligand>
        <name>S-adenosyl-L-methionine</name>
        <dbReference type="ChEBI" id="CHEBI:59789"/>
    </ligand>
</feature>
<feature type="binding site" evidence="1">
    <location>
        <position position="202"/>
    </location>
    <ligand>
        <name>S-adenosyl-L-methionine</name>
        <dbReference type="ChEBI" id="CHEBI:59789"/>
    </ligand>
</feature>
<feature type="binding site" evidence="1">
    <location>
        <begin position="225"/>
        <end position="227"/>
    </location>
    <ligand>
        <name>S-adenosyl-L-methionine</name>
        <dbReference type="ChEBI" id="CHEBI:59789"/>
    </ligand>
</feature>
<feature type="binding site" evidence="1">
    <location>
        <position position="301"/>
    </location>
    <ligand>
        <name>S-adenosyl-L-methionine</name>
        <dbReference type="ChEBI" id="CHEBI:59789"/>
    </ligand>
</feature>
<feature type="disulfide bond" description="(transient)" evidence="1">
    <location>
        <begin position="112"/>
        <end position="344"/>
    </location>
</feature>
<dbReference type="EC" id="2.1.1.192" evidence="1"/>
<dbReference type="EMBL" id="CU207366">
    <property type="protein sequence ID" value="CAL65339.1"/>
    <property type="molecule type" value="Genomic_DNA"/>
</dbReference>
<dbReference type="SMR" id="A0LY94"/>
<dbReference type="STRING" id="411154.GFO_0353"/>
<dbReference type="KEGG" id="gfo:GFO_0353"/>
<dbReference type="eggNOG" id="COG0820">
    <property type="taxonomic scope" value="Bacteria"/>
</dbReference>
<dbReference type="HOGENOM" id="CLU_029101_2_0_10"/>
<dbReference type="Proteomes" id="UP000000755">
    <property type="component" value="Chromosome"/>
</dbReference>
<dbReference type="GO" id="GO:0005737">
    <property type="term" value="C:cytoplasm"/>
    <property type="evidence" value="ECO:0007669"/>
    <property type="project" value="UniProtKB-SubCell"/>
</dbReference>
<dbReference type="GO" id="GO:0051539">
    <property type="term" value="F:4 iron, 4 sulfur cluster binding"/>
    <property type="evidence" value="ECO:0007669"/>
    <property type="project" value="UniProtKB-UniRule"/>
</dbReference>
<dbReference type="GO" id="GO:0046872">
    <property type="term" value="F:metal ion binding"/>
    <property type="evidence" value="ECO:0007669"/>
    <property type="project" value="UniProtKB-KW"/>
</dbReference>
<dbReference type="GO" id="GO:0070040">
    <property type="term" value="F:rRNA (adenine(2503)-C2-)-methyltransferase activity"/>
    <property type="evidence" value="ECO:0007669"/>
    <property type="project" value="UniProtKB-UniRule"/>
</dbReference>
<dbReference type="GO" id="GO:0019843">
    <property type="term" value="F:rRNA binding"/>
    <property type="evidence" value="ECO:0007669"/>
    <property type="project" value="UniProtKB-UniRule"/>
</dbReference>
<dbReference type="GO" id="GO:0002935">
    <property type="term" value="F:tRNA (adenine(37)-C2)-methyltransferase activity"/>
    <property type="evidence" value="ECO:0007669"/>
    <property type="project" value="UniProtKB-UniRule"/>
</dbReference>
<dbReference type="GO" id="GO:0000049">
    <property type="term" value="F:tRNA binding"/>
    <property type="evidence" value="ECO:0007669"/>
    <property type="project" value="UniProtKB-UniRule"/>
</dbReference>
<dbReference type="GO" id="GO:0070475">
    <property type="term" value="P:rRNA base methylation"/>
    <property type="evidence" value="ECO:0007669"/>
    <property type="project" value="UniProtKB-UniRule"/>
</dbReference>
<dbReference type="GO" id="GO:0030488">
    <property type="term" value="P:tRNA methylation"/>
    <property type="evidence" value="ECO:0007669"/>
    <property type="project" value="UniProtKB-UniRule"/>
</dbReference>
<dbReference type="CDD" id="cd01335">
    <property type="entry name" value="Radical_SAM"/>
    <property type="match status" value="1"/>
</dbReference>
<dbReference type="FunFam" id="3.20.20.70:FF:000014">
    <property type="entry name" value="Probable dual-specificity RNA methyltransferase RlmN"/>
    <property type="match status" value="1"/>
</dbReference>
<dbReference type="Gene3D" id="1.10.150.530">
    <property type="match status" value="1"/>
</dbReference>
<dbReference type="Gene3D" id="3.20.20.70">
    <property type="entry name" value="Aldolase class I"/>
    <property type="match status" value="1"/>
</dbReference>
<dbReference type="HAMAP" id="MF_01849">
    <property type="entry name" value="RNA_methyltr_RlmN"/>
    <property type="match status" value="1"/>
</dbReference>
<dbReference type="InterPro" id="IPR013785">
    <property type="entry name" value="Aldolase_TIM"/>
</dbReference>
<dbReference type="InterPro" id="IPR040072">
    <property type="entry name" value="Methyltransferase_A"/>
</dbReference>
<dbReference type="InterPro" id="IPR048641">
    <property type="entry name" value="RlmN_N"/>
</dbReference>
<dbReference type="InterPro" id="IPR027492">
    <property type="entry name" value="RNA_MTrfase_RlmN"/>
</dbReference>
<dbReference type="InterPro" id="IPR004383">
    <property type="entry name" value="rRNA_lsu_MTrfase_RlmN/Cfr"/>
</dbReference>
<dbReference type="InterPro" id="IPR007197">
    <property type="entry name" value="rSAM"/>
</dbReference>
<dbReference type="NCBIfam" id="TIGR00048">
    <property type="entry name" value="rRNA_mod_RlmN"/>
    <property type="match status" value="1"/>
</dbReference>
<dbReference type="PANTHER" id="PTHR30544">
    <property type="entry name" value="23S RRNA METHYLTRANSFERASE"/>
    <property type="match status" value="1"/>
</dbReference>
<dbReference type="PANTHER" id="PTHR30544:SF5">
    <property type="entry name" value="RADICAL SAM CORE DOMAIN-CONTAINING PROTEIN"/>
    <property type="match status" value="1"/>
</dbReference>
<dbReference type="Pfam" id="PF04055">
    <property type="entry name" value="Radical_SAM"/>
    <property type="match status" value="1"/>
</dbReference>
<dbReference type="Pfam" id="PF21016">
    <property type="entry name" value="RlmN_N"/>
    <property type="match status" value="1"/>
</dbReference>
<dbReference type="PIRSF" id="PIRSF006004">
    <property type="entry name" value="CHP00048"/>
    <property type="match status" value="1"/>
</dbReference>
<dbReference type="SFLD" id="SFLDF00275">
    <property type="entry name" value="adenosine_C2_methyltransferase"/>
    <property type="match status" value="1"/>
</dbReference>
<dbReference type="SFLD" id="SFLDG01062">
    <property type="entry name" value="methyltransferase_(Class_A)"/>
    <property type="match status" value="1"/>
</dbReference>
<dbReference type="SUPFAM" id="SSF102114">
    <property type="entry name" value="Radical SAM enzymes"/>
    <property type="match status" value="1"/>
</dbReference>
<dbReference type="PROSITE" id="PS51918">
    <property type="entry name" value="RADICAL_SAM"/>
    <property type="match status" value="1"/>
</dbReference>
<sequence>MYFCGVKDRKKDIRALTKEQLQKFFVAEGDKSFRGTQVYEWLWSKAAHSFDDMTNISKETRQMLKDNFVINHIRVDRMQRSSDGTIKNAVKLHDALTVESVLIPTKSRTTACVSSQVGCSLDCQFCATAKLKRMRNLNPDEIYDQVVAIDNESRLYFDRPLSNIVFMGMGEPLMNYNNVMKAVEKITSPEGLGMSPKRITISTSGVPKMIKKLADDEAKIKLAVSLHSARNEVRTQIMPFNETFPLEDLREALEYWYSKTTSRITYEYIVWKDINDTREDAQALVRFCKYVPCKVNLIEYNPIDDGNFQQAAIEATNMYQDMLERNGITVTVRRSRGKDIDAACGQLANKSA</sequence>
<reference key="1">
    <citation type="journal article" date="2006" name="Environ. Microbiol.">
        <title>Whole genome analysis of the marine Bacteroidetes'Gramella forsetii' reveals adaptations to degradation of polymeric organic matter.</title>
        <authorList>
            <person name="Bauer M."/>
            <person name="Kube M."/>
            <person name="Teeling H."/>
            <person name="Richter M."/>
            <person name="Lombardot T."/>
            <person name="Allers E."/>
            <person name="Wuerdemann C.A."/>
            <person name="Quast C."/>
            <person name="Kuhl H."/>
            <person name="Knaust F."/>
            <person name="Woebken D."/>
            <person name="Bischof K."/>
            <person name="Mussmann M."/>
            <person name="Choudhuri J.V."/>
            <person name="Meyer F."/>
            <person name="Reinhardt R."/>
            <person name="Amann R.I."/>
            <person name="Gloeckner F.O."/>
        </authorList>
    </citation>
    <scope>NUCLEOTIDE SEQUENCE [LARGE SCALE GENOMIC DNA]</scope>
    <source>
        <strain>DSM 17595 / CGMCC 1.15422 / KT0803</strain>
    </source>
</reference>
<name>RLMN_CHRFK</name>
<comment type="function">
    <text evidence="1">Specifically methylates position 2 of adenine 2503 in 23S rRNA and position 2 of adenine 37 in tRNAs.</text>
</comment>
<comment type="catalytic activity">
    <reaction evidence="1">
        <text>adenosine(2503) in 23S rRNA + 2 reduced [2Fe-2S]-[ferredoxin] + 2 S-adenosyl-L-methionine = 2-methyladenosine(2503) in 23S rRNA + 5'-deoxyadenosine + L-methionine + 2 oxidized [2Fe-2S]-[ferredoxin] + S-adenosyl-L-homocysteine</text>
        <dbReference type="Rhea" id="RHEA:42916"/>
        <dbReference type="Rhea" id="RHEA-COMP:10000"/>
        <dbReference type="Rhea" id="RHEA-COMP:10001"/>
        <dbReference type="Rhea" id="RHEA-COMP:10152"/>
        <dbReference type="Rhea" id="RHEA-COMP:10282"/>
        <dbReference type="ChEBI" id="CHEBI:17319"/>
        <dbReference type="ChEBI" id="CHEBI:33737"/>
        <dbReference type="ChEBI" id="CHEBI:33738"/>
        <dbReference type="ChEBI" id="CHEBI:57844"/>
        <dbReference type="ChEBI" id="CHEBI:57856"/>
        <dbReference type="ChEBI" id="CHEBI:59789"/>
        <dbReference type="ChEBI" id="CHEBI:74411"/>
        <dbReference type="ChEBI" id="CHEBI:74497"/>
        <dbReference type="EC" id="2.1.1.192"/>
    </reaction>
</comment>
<comment type="catalytic activity">
    <reaction evidence="1">
        <text>adenosine(37) in tRNA + 2 reduced [2Fe-2S]-[ferredoxin] + 2 S-adenosyl-L-methionine = 2-methyladenosine(37) in tRNA + 5'-deoxyadenosine + L-methionine + 2 oxidized [2Fe-2S]-[ferredoxin] + S-adenosyl-L-homocysteine</text>
        <dbReference type="Rhea" id="RHEA:43332"/>
        <dbReference type="Rhea" id="RHEA-COMP:10000"/>
        <dbReference type="Rhea" id="RHEA-COMP:10001"/>
        <dbReference type="Rhea" id="RHEA-COMP:10162"/>
        <dbReference type="Rhea" id="RHEA-COMP:10485"/>
        <dbReference type="ChEBI" id="CHEBI:17319"/>
        <dbReference type="ChEBI" id="CHEBI:33737"/>
        <dbReference type="ChEBI" id="CHEBI:33738"/>
        <dbReference type="ChEBI" id="CHEBI:57844"/>
        <dbReference type="ChEBI" id="CHEBI:57856"/>
        <dbReference type="ChEBI" id="CHEBI:59789"/>
        <dbReference type="ChEBI" id="CHEBI:74411"/>
        <dbReference type="ChEBI" id="CHEBI:74497"/>
        <dbReference type="EC" id="2.1.1.192"/>
    </reaction>
</comment>
<comment type="cofactor">
    <cofactor evidence="1">
        <name>[4Fe-4S] cluster</name>
        <dbReference type="ChEBI" id="CHEBI:49883"/>
    </cofactor>
    <text evidence="1">Binds 1 [4Fe-4S] cluster. The cluster is coordinated with 3 cysteines and an exchangeable S-adenosyl-L-methionine.</text>
</comment>
<comment type="subcellular location">
    <subcellularLocation>
        <location evidence="1">Cytoplasm</location>
    </subcellularLocation>
</comment>
<comment type="miscellaneous">
    <text evidence="1">Reaction proceeds by a ping-pong mechanism involving intermediate methylation of a conserved cysteine residue.</text>
</comment>
<comment type="similarity">
    <text evidence="1">Belongs to the radical SAM superfamily. RlmN family.</text>
</comment>
<gene>
    <name evidence="1" type="primary">rlmN</name>
    <name type="ordered locus">GFO_0353</name>
</gene>
<organism>
    <name type="scientific">Christiangramia forsetii (strain DSM 17595 / CGMCC 1.15422 / KT0803)</name>
    <name type="common">Gramella forsetii</name>
    <dbReference type="NCBI Taxonomy" id="411154"/>
    <lineage>
        <taxon>Bacteria</taxon>
        <taxon>Pseudomonadati</taxon>
        <taxon>Bacteroidota</taxon>
        <taxon>Flavobacteriia</taxon>
        <taxon>Flavobacteriales</taxon>
        <taxon>Flavobacteriaceae</taxon>
        <taxon>Christiangramia</taxon>
    </lineage>
</organism>
<keyword id="KW-0004">4Fe-4S</keyword>
<keyword id="KW-0963">Cytoplasm</keyword>
<keyword id="KW-1015">Disulfide bond</keyword>
<keyword id="KW-0408">Iron</keyword>
<keyword id="KW-0411">Iron-sulfur</keyword>
<keyword id="KW-0479">Metal-binding</keyword>
<keyword id="KW-0489">Methyltransferase</keyword>
<keyword id="KW-0698">rRNA processing</keyword>
<keyword id="KW-0949">S-adenosyl-L-methionine</keyword>
<keyword id="KW-0808">Transferase</keyword>
<keyword id="KW-0819">tRNA processing</keyword>